<feature type="signal peptide" evidence="2">
    <location>
        <begin position="1"/>
        <end position="23"/>
    </location>
</feature>
<feature type="peptide" id="PRO_0000448213" description="U-Asilidin(1)-Eru1a">
    <location>
        <begin position="24"/>
        <end position="51"/>
    </location>
</feature>
<feature type="disulfide bond" evidence="6">
    <location>
        <begin position="26"/>
        <end position="40"/>
    </location>
</feature>
<feature type="disulfide bond" evidence="6">
    <location>
        <begin position="33"/>
        <end position="44"/>
    </location>
</feature>
<feature type="disulfide bond" evidence="6">
    <location>
        <begin position="39"/>
        <end position="49"/>
    </location>
</feature>
<keyword id="KW-1015">Disulfide bond</keyword>
<keyword id="KW-0960">Knottin</keyword>
<keyword id="KW-0528">Neurotoxin</keyword>
<keyword id="KW-0964">Secreted</keyword>
<keyword id="KW-0732">Signal</keyword>
<keyword id="KW-0800">Toxin</keyword>
<accession>P0DQJ1</accession>
<organism>
    <name type="scientific">Eutolmus rufibarbis</name>
    <name type="common">Golden-tabbed robberfly</name>
    <name type="synonym">Asilus rufibarbis</name>
    <dbReference type="NCBI Taxonomy" id="1936067"/>
    <lineage>
        <taxon>Eukaryota</taxon>
        <taxon>Metazoa</taxon>
        <taxon>Ecdysozoa</taxon>
        <taxon>Arthropoda</taxon>
        <taxon>Hexapoda</taxon>
        <taxon>Insecta</taxon>
        <taxon>Pterygota</taxon>
        <taxon>Neoptera</taxon>
        <taxon>Endopterygota</taxon>
        <taxon>Diptera</taxon>
        <taxon>Brachycera</taxon>
        <taxon>Muscomorpha</taxon>
        <taxon>Asiloidea</taxon>
        <taxon>Asilidae</taxon>
        <taxon>Asilinae</taxon>
        <taxon>Eutolmus</taxon>
    </lineage>
</organism>
<proteinExistence type="evidence at protein level"/>
<protein>
    <recommendedName>
        <fullName evidence="4">U-Asilidin(1)-Eru1a</fullName>
    </recommendedName>
</protein>
<dbReference type="SMR" id="P0DQJ1"/>
<dbReference type="GO" id="GO:0005576">
    <property type="term" value="C:extracellular region"/>
    <property type="evidence" value="ECO:0007669"/>
    <property type="project" value="UniProtKB-SubCell"/>
</dbReference>
<dbReference type="GO" id="GO:0090729">
    <property type="term" value="F:toxin activity"/>
    <property type="evidence" value="ECO:0007669"/>
    <property type="project" value="UniProtKB-KW"/>
</dbReference>
<evidence type="ECO:0000250" key="1">
    <source>
        <dbReference type="UniProtKB" id="P0DQI8"/>
    </source>
</evidence>
<evidence type="ECO:0000255" key="2"/>
<evidence type="ECO:0000269" key="3">
    <source>
    </source>
</evidence>
<evidence type="ECO:0000303" key="4">
    <source>
    </source>
</evidence>
<evidence type="ECO:0000305" key="5"/>
<evidence type="ECO:0000305" key="6">
    <source>
    </source>
</evidence>
<sequence>MANYIDVLSFLAIICATVLATLAQDCSPEGARCVHDSECCFNECIDSLCQP</sequence>
<name>ASI1A_EUTRU</name>
<reference key="1">
    <citation type="journal article" date="2018" name="Toxins">
        <title>A Dipteran's novel sucker punch: evolution of arthropod atypical venom with a neurotoxic component in robber fliezs (Asilidae, Diptera).</title>
        <authorList>
            <person name="Drukewitz S.H."/>
            <person name="Fuhrmann N."/>
            <person name="Undheim E.A.B."/>
            <person name="Blanke A."/>
            <person name="Giribaldi J."/>
            <person name="Mary R."/>
            <person name="Laconde G."/>
            <person name="Dutertre S."/>
            <person name="von Reumont B.M."/>
        </authorList>
    </citation>
    <scope>NUCLEOTIDE SEQUENCE [MRNA]</scope>
    <scope>IDENTIFICATION BY MASS SPECTROMETRY</scope>
    <scope>SUBCELLULAR LOCATION</scope>
    <source>
        <tissue>Venom</tissue>
        <tissue>Venom gland</tissue>
    </source>
</reference>
<comment type="function">
    <text evidence="1">Induces neurotoxic effect on honeybees, including slow movements, disorientation and paralysis. Since it provokes similar symptoms than omega-atracotoxin, it is probable that it acts in the same way by inhibiting voltage-gated calcium channels.</text>
</comment>
<comment type="subcellular location">
    <subcellularLocation>
        <location evidence="3">Secreted</location>
    </subcellularLocation>
</comment>
<comment type="tissue specificity">
    <text evidence="6">Expressed by the venom gland. The most highly expressed peptides U-Asilidin1-Mar1a is around 3000 times higher expressed in the venom thoracic glands compared to its body tissues.</text>
</comment>
<comment type="domain">
    <text evidence="6">The presence of a 'disulfide through disulfide knot' structurally defines this protein as a knottin.</text>
</comment>
<comment type="similarity">
    <text evidence="5">Belongs to the asilidin-1 family.</text>
</comment>
<comment type="online information" name="National Center for Biotechnology Information (NCBI)">
    <link uri="https://www.ncbi.nlm.nih.gov/nuccore/GFZQ00000000"/>
</comment>
<comment type="online information" name="National Center for Biotechnology Information (NCBI)">
    <link uri="https://www.ncbi.nlm.nih.gov/nuccore/GFFZ00000000"/>
</comment>